<proteinExistence type="evidence at transcript level"/>
<dbReference type="EMBL" id="BC103153">
    <property type="protein sequence ID" value="AAI03154.1"/>
    <property type="molecule type" value="mRNA"/>
</dbReference>
<dbReference type="RefSeq" id="NP_001029389.1">
    <property type="nucleotide sequence ID" value="NM_001034217.2"/>
</dbReference>
<dbReference type="RefSeq" id="XP_005209737.1">
    <property type="nucleotide sequence ID" value="XM_005209680.5"/>
</dbReference>
<dbReference type="SMR" id="Q3ZBR5"/>
<dbReference type="FunCoup" id="Q3ZBR5">
    <property type="interactions" value="4048"/>
</dbReference>
<dbReference type="STRING" id="9913.ENSBTAP00000013634"/>
<dbReference type="PaxDb" id="9913-ENSBTAP00000013634"/>
<dbReference type="Ensembl" id="ENSBTAT00000013634.5">
    <property type="protein sequence ID" value="ENSBTAP00000013634.3"/>
    <property type="gene ID" value="ENSBTAG00000010321.5"/>
</dbReference>
<dbReference type="GeneID" id="504602"/>
<dbReference type="KEGG" id="bta:504602"/>
<dbReference type="CTD" id="7265"/>
<dbReference type="VEuPathDB" id="HostDB:ENSBTAG00000010321"/>
<dbReference type="VGNC" id="VGNC:36453">
    <property type="gene designation" value="TTC1"/>
</dbReference>
<dbReference type="eggNOG" id="KOG4234">
    <property type="taxonomic scope" value="Eukaryota"/>
</dbReference>
<dbReference type="GeneTree" id="ENSGT00940000157213"/>
<dbReference type="HOGENOM" id="CLU_058463_3_0_1"/>
<dbReference type="InParanoid" id="Q3ZBR5"/>
<dbReference type="OMA" id="KSAIDDC"/>
<dbReference type="OrthoDB" id="1872379at2759"/>
<dbReference type="TreeFam" id="TF317515"/>
<dbReference type="Proteomes" id="UP000009136">
    <property type="component" value="Chromosome 7"/>
</dbReference>
<dbReference type="Bgee" id="ENSBTAG00000010321">
    <property type="expression patterns" value="Expressed in oocyte and 105 other cell types or tissues"/>
</dbReference>
<dbReference type="GO" id="GO:0005829">
    <property type="term" value="C:cytosol"/>
    <property type="evidence" value="ECO:0007669"/>
    <property type="project" value="Ensembl"/>
</dbReference>
<dbReference type="FunFam" id="1.25.40.10:FF:000367">
    <property type="entry name" value="Tetratricopeptide repeat domain 1"/>
    <property type="match status" value="1"/>
</dbReference>
<dbReference type="Gene3D" id="1.25.40.10">
    <property type="entry name" value="Tetratricopeptide repeat domain"/>
    <property type="match status" value="1"/>
</dbReference>
<dbReference type="InterPro" id="IPR011990">
    <property type="entry name" value="TPR-like_helical_dom_sf"/>
</dbReference>
<dbReference type="InterPro" id="IPR052769">
    <property type="entry name" value="TPR_domain_protein"/>
</dbReference>
<dbReference type="InterPro" id="IPR019734">
    <property type="entry name" value="TPR_rpt"/>
</dbReference>
<dbReference type="PANTHER" id="PTHR46014">
    <property type="entry name" value="TETRATRICOPEPTIDE REPEAT PROTEIN 1"/>
    <property type="match status" value="1"/>
</dbReference>
<dbReference type="PANTHER" id="PTHR46014:SF1">
    <property type="entry name" value="TETRATRICOPEPTIDE REPEAT PROTEIN 1"/>
    <property type="match status" value="1"/>
</dbReference>
<dbReference type="Pfam" id="PF00515">
    <property type="entry name" value="TPR_1"/>
    <property type="match status" value="1"/>
</dbReference>
<dbReference type="Pfam" id="PF13181">
    <property type="entry name" value="TPR_8"/>
    <property type="match status" value="1"/>
</dbReference>
<dbReference type="SMART" id="SM00028">
    <property type="entry name" value="TPR"/>
    <property type="match status" value="3"/>
</dbReference>
<dbReference type="SUPFAM" id="SSF48452">
    <property type="entry name" value="TPR-like"/>
    <property type="match status" value="1"/>
</dbReference>
<dbReference type="PROSITE" id="PS50005">
    <property type="entry name" value="TPR"/>
    <property type="match status" value="3"/>
</dbReference>
<dbReference type="PROSITE" id="PS50293">
    <property type="entry name" value="TPR_REGION"/>
    <property type="match status" value="1"/>
</dbReference>
<accession>Q3ZBR5</accession>
<evidence type="ECO:0000250" key="1">
    <source>
        <dbReference type="UniProtKB" id="Q99614"/>
    </source>
</evidence>
<evidence type="ECO:0000256" key="2">
    <source>
        <dbReference type="SAM" id="MobiDB-lite"/>
    </source>
</evidence>
<reference key="1">
    <citation type="submission" date="2005-08" db="EMBL/GenBank/DDBJ databases">
        <authorList>
            <consortium name="NIH - Mammalian Gene Collection (MGC) project"/>
        </authorList>
    </citation>
    <scope>NUCLEOTIDE SEQUENCE [LARGE SCALE MRNA]</scope>
    <source>
        <strain>Hereford</strain>
        <tissue>Heart ventricle</tissue>
    </source>
</reference>
<name>TTC1_BOVIN</name>
<keyword id="KW-0597">Phosphoprotein</keyword>
<keyword id="KW-1185">Reference proteome</keyword>
<keyword id="KW-0677">Repeat</keyword>
<keyword id="KW-0802">TPR repeat</keyword>
<gene>
    <name type="primary">TTC1</name>
</gene>
<protein>
    <recommendedName>
        <fullName>Tetratricopeptide repeat protein 1</fullName>
        <shortName>TPR repeat protein 1</shortName>
    </recommendedName>
</protein>
<comment type="subunit">
    <text evidence="1">Interacts with the GAP domain of NF1. Interacts (via TPR repeats) with HSP90AA1 and HSPA8.</text>
</comment>
<sequence>MGEKSNCRVPEDLFTGLKVTDPQEAECLHPPVSSGKEQHSQSELLKDVDAQPQEDQGEEECFHDASASFETEEPGADKLENKPEDDMNPSELDEEYLMELEKNMPDEEKKRRREESSRLKEEGNEQFKKGDYIEAESSYTRALQTCPSCFQKDRSVLFSNRAAARMKQEKKEMAISDCSKAIQLNPSYIRAILRRAELYEKTDKLDEALEDYKSILEKDPSVHQAREACMRLPKQIEERNERLKEEMLGKLKDLGNLVLRPFGLSTENFQIKQDSSTGSYSINFVQNPNNNR</sequence>
<organism>
    <name type="scientific">Bos taurus</name>
    <name type="common">Bovine</name>
    <dbReference type="NCBI Taxonomy" id="9913"/>
    <lineage>
        <taxon>Eukaryota</taxon>
        <taxon>Metazoa</taxon>
        <taxon>Chordata</taxon>
        <taxon>Craniata</taxon>
        <taxon>Vertebrata</taxon>
        <taxon>Euteleostomi</taxon>
        <taxon>Mammalia</taxon>
        <taxon>Eutheria</taxon>
        <taxon>Laurasiatheria</taxon>
        <taxon>Artiodactyla</taxon>
        <taxon>Ruminantia</taxon>
        <taxon>Pecora</taxon>
        <taxon>Bovidae</taxon>
        <taxon>Bovinae</taxon>
        <taxon>Bos</taxon>
    </lineage>
</organism>
<feature type="chain" id="PRO_0000250506" description="Tetratricopeptide repeat protein 1">
    <location>
        <begin position="1"/>
        <end position="292"/>
    </location>
</feature>
<feature type="repeat" description="TPR 1">
    <location>
        <begin position="116"/>
        <end position="149"/>
    </location>
</feature>
<feature type="repeat" description="TPR 2">
    <location>
        <begin position="155"/>
        <end position="188"/>
    </location>
</feature>
<feature type="repeat" description="TPR 3">
    <location>
        <begin position="189"/>
        <end position="222"/>
    </location>
</feature>
<feature type="region of interest" description="Disordered" evidence="2">
    <location>
        <begin position="20"/>
        <end position="125"/>
    </location>
</feature>
<feature type="compositionally biased region" description="Basic and acidic residues" evidence="2">
    <location>
        <begin position="36"/>
        <end position="49"/>
    </location>
</feature>
<feature type="compositionally biased region" description="Basic and acidic residues" evidence="2">
    <location>
        <begin position="75"/>
        <end position="85"/>
    </location>
</feature>
<feature type="compositionally biased region" description="Acidic residues" evidence="2">
    <location>
        <begin position="86"/>
        <end position="98"/>
    </location>
</feature>
<feature type="compositionally biased region" description="Basic and acidic residues" evidence="2">
    <location>
        <begin position="99"/>
        <end position="125"/>
    </location>
</feature>
<feature type="modified residue" description="Phosphoserine" evidence="1">
    <location>
        <position position="90"/>
    </location>
</feature>